<evidence type="ECO:0000255" key="1">
    <source>
        <dbReference type="HAMAP-Rule" id="MF_03119"/>
    </source>
</evidence>
<accession>B4QSM8</accession>
<name>MTNA_DROSI</name>
<gene>
    <name type="ORF">GD16414</name>
</gene>
<sequence>MSLQSIKYSRGSLEILDQLLLPGQSKYVVVRGVEDGWKVINKMQVRGAPAIAIVGCLSLAVEINPEDFENKKSLRQEIEGKLNYLVSARPTAVNMKIAADELITLANELYKDEATDVTQMKHRFLDATEAMLKKDIADNRAIGANGAQAILQRVAKAGKTPAGSTGSVRVLTHCNTGSLATAGYGTALGVVRQLAELGKLEHVYCTETRPYNQGARLTAYELVHEKFPATLVLDSMVAALLRAKNVAAVVVGADRVASNGDTANKIGTYQIAVVAKHHDVPFYVAAPLTSIDLAIPGGDHIIIEERPDREMTHVGEHRIAAPGINCWNPAFDVTPASLITGIITERGVFKPAELKEAITKLLES</sequence>
<keyword id="KW-0028">Amino-acid biosynthesis</keyword>
<keyword id="KW-0963">Cytoplasm</keyword>
<keyword id="KW-0413">Isomerase</keyword>
<keyword id="KW-0486">Methionine biosynthesis</keyword>
<keyword id="KW-0539">Nucleus</keyword>
<keyword id="KW-1185">Reference proteome</keyword>
<protein>
    <recommendedName>
        <fullName evidence="1">Methylthioribose-1-phosphate isomerase</fullName>
        <shortName evidence="1">M1Pi</shortName>
        <shortName evidence="1">MTR-1-P isomerase</shortName>
        <ecNumber evidence="1">5.3.1.23</ecNumber>
    </recommendedName>
    <alternativeName>
        <fullName evidence="1">S-methyl-5-thioribose-1-phosphate isomerase</fullName>
    </alternativeName>
    <alternativeName>
        <fullName evidence="1">Translation initiation factor eIF-2B subunit alpha/beta/delta-like protein</fullName>
    </alternativeName>
</protein>
<proteinExistence type="inferred from homology"/>
<reference key="1">
    <citation type="journal article" date="2007" name="Nature">
        <title>Evolution of genes and genomes on the Drosophila phylogeny.</title>
        <authorList>
            <consortium name="Drosophila 12 genomes consortium"/>
        </authorList>
    </citation>
    <scope>NUCLEOTIDE SEQUENCE [LARGE SCALE GENOMIC DNA]</scope>
</reference>
<dbReference type="EC" id="5.3.1.23" evidence="1"/>
<dbReference type="EMBL" id="CM000364">
    <property type="protein sequence ID" value="EDX15125.1"/>
    <property type="molecule type" value="Genomic_DNA"/>
</dbReference>
<dbReference type="SMR" id="B4QSM8"/>
<dbReference type="STRING" id="7240.B4QSM8"/>
<dbReference type="EnsemblMetazoa" id="FBtr0216324">
    <property type="protein sequence ID" value="FBpp0214816"/>
    <property type="gene ID" value="FBgn0188031"/>
</dbReference>
<dbReference type="EnsemblMetazoa" id="FBtr0359897">
    <property type="protein sequence ID" value="FBpp0323769"/>
    <property type="gene ID" value="FBgn0188031"/>
</dbReference>
<dbReference type="EnsemblMetazoa" id="XM_016173132.3">
    <property type="protein sequence ID" value="XP_016037109.1"/>
    <property type="gene ID" value="LOC6730340"/>
</dbReference>
<dbReference type="EnsemblMetazoa" id="XM_016173133.3">
    <property type="protein sequence ID" value="XP_016037110.1"/>
    <property type="gene ID" value="LOC6730340"/>
</dbReference>
<dbReference type="GeneID" id="6730340"/>
<dbReference type="KEGG" id="dsi:Dsimw501_GD16414"/>
<dbReference type="HOGENOM" id="CLU_016218_1_3_1"/>
<dbReference type="OMA" id="CETRPLN"/>
<dbReference type="OrthoDB" id="2461at2759"/>
<dbReference type="PhylomeDB" id="B4QSM8"/>
<dbReference type="UniPathway" id="UPA00904">
    <property type="reaction ID" value="UER00874"/>
</dbReference>
<dbReference type="Proteomes" id="UP000000304">
    <property type="component" value="Chromosome 3R"/>
</dbReference>
<dbReference type="Bgee" id="FBgn0188031">
    <property type="expression patterns" value="Expressed in adult organism and 3 other cell types or tissues"/>
</dbReference>
<dbReference type="GO" id="GO:0005737">
    <property type="term" value="C:cytoplasm"/>
    <property type="evidence" value="ECO:0007669"/>
    <property type="project" value="UniProtKB-SubCell"/>
</dbReference>
<dbReference type="GO" id="GO:0005634">
    <property type="term" value="C:nucleus"/>
    <property type="evidence" value="ECO:0007669"/>
    <property type="project" value="UniProtKB-SubCell"/>
</dbReference>
<dbReference type="GO" id="GO:0046523">
    <property type="term" value="F:S-methyl-5-thioribose-1-phosphate isomerase activity"/>
    <property type="evidence" value="ECO:0007669"/>
    <property type="project" value="UniProtKB-UniRule"/>
</dbReference>
<dbReference type="GO" id="GO:0019509">
    <property type="term" value="P:L-methionine salvage from methylthioadenosine"/>
    <property type="evidence" value="ECO:0007669"/>
    <property type="project" value="UniProtKB-UniRule"/>
</dbReference>
<dbReference type="FunFam" id="1.20.120.420:FF:000010">
    <property type="entry name" value="Methylthioribose-1-phosphate isomerase"/>
    <property type="match status" value="1"/>
</dbReference>
<dbReference type="FunFam" id="3.40.50.10470:FF:000003">
    <property type="entry name" value="Methylthioribose-1-phosphate isomerase"/>
    <property type="match status" value="1"/>
</dbReference>
<dbReference type="Gene3D" id="1.20.120.420">
    <property type="entry name" value="translation initiation factor eif-2b, domain 1"/>
    <property type="match status" value="1"/>
</dbReference>
<dbReference type="Gene3D" id="3.40.50.10470">
    <property type="entry name" value="Translation initiation factor eif-2b, domain 2"/>
    <property type="match status" value="1"/>
</dbReference>
<dbReference type="HAMAP" id="MF_01678">
    <property type="entry name" value="Salvage_MtnA"/>
    <property type="match status" value="1"/>
</dbReference>
<dbReference type="InterPro" id="IPR000649">
    <property type="entry name" value="IF-2B-related"/>
</dbReference>
<dbReference type="InterPro" id="IPR005251">
    <property type="entry name" value="IF-M1Pi"/>
</dbReference>
<dbReference type="InterPro" id="IPR042529">
    <property type="entry name" value="IF_2B-like_C"/>
</dbReference>
<dbReference type="InterPro" id="IPR011559">
    <property type="entry name" value="Initiation_fac_2B_a/b/d"/>
</dbReference>
<dbReference type="InterPro" id="IPR027363">
    <property type="entry name" value="M1Pi_N"/>
</dbReference>
<dbReference type="InterPro" id="IPR037171">
    <property type="entry name" value="NagB/RpiA_transferase-like"/>
</dbReference>
<dbReference type="NCBIfam" id="TIGR00524">
    <property type="entry name" value="eIF-2B_rel"/>
    <property type="match status" value="1"/>
</dbReference>
<dbReference type="NCBIfam" id="NF004326">
    <property type="entry name" value="PRK05720.1"/>
    <property type="match status" value="1"/>
</dbReference>
<dbReference type="NCBIfam" id="TIGR00512">
    <property type="entry name" value="salvage_mtnA"/>
    <property type="match status" value="1"/>
</dbReference>
<dbReference type="PANTHER" id="PTHR43475">
    <property type="entry name" value="METHYLTHIORIBOSE-1-PHOSPHATE ISOMERASE"/>
    <property type="match status" value="1"/>
</dbReference>
<dbReference type="PANTHER" id="PTHR43475:SF1">
    <property type="entry name" value="METHYLTHIORIBOSE-1-PHOSPHATE ISOMERASE"/>
    <property type="match status" value="1"/>
</dbReference>
<dbReference type="Pfam" id="PF01008">
    <property type="entry name" value="IF-2B"/>
    <property type="match status" value="1"/>
</dbReference>
<dbReference type="SUPFAM" id="SSF100950">
    <property type="entry name" value="NagB/RpiA/CoA transferase-like"/>
    <property type="match status" value="1"/>
</dbReference>
<organism>
    <name type="scientific">Drosophila simulans</name>
    <name type="common">Fruit fly</name>
    <dbReference type="NCBI Taxonomy" id="7240"/>
    <lineage>
        <taxon>Eukaryota</taxon>
        <taxon>Metazoa</taxon>
        <taxon>Ecdysozoa</taxon>
        <taxon>Arthropoda</taxon>
        <taxon>Hexapoda</taxon>
        <taxon>Insecta</taxon>
        <taxon>Pterygota</taxon>
        <taxon>Neoptera</taxon>
        <taxon>Endopterygota</taxon>
        <taxon>Diptera</taxon>
        <taxon>Brachycera</taxon>
        <taxon>Muscomorpha</taxon>
        <taxon>Ephydroidea</taxon>
        <taxon>Drosophilidae</taxon>
        <taxon>Drosophila</taxon>
        <taxon>Sophophora</taxon>
    </lineage>
</organism>
<feature type="chain" id="PRO_0000401983" description="Methylthioribose-1-phosphate isomerase">
    <location>
        <begin position="1"/>
        <end position="364"/>
    </location>
</feature>
<feature type="active site" description="Proton donor" evidence="1">
    <location>
        <position position="254"/>
    </location>
</feature>
<feature type="site" description="Transition state stabilizer" evidence="1">
    <location>
        <position position="174"/>
    </location>
</feature>
<comment type="function">
    <text evidence="1">Catalyzes the interconversion of methylthioribose-1-phosphate (MTR-1-P) into methylthioribulose-1-phosphate (MTRu-1-P).</text>
</comment>
<comment type="catalytic activity">
    <reaction evidence="1">
        <text>5-(methylsulfanyl)-alpha-D-ribose 1-phosphate = 5-(methylsulfanyl)-D-ribulose 1-phosphate</text>
        <dbReference type="Rhea" id="RHEA:19989"/>
        <dbReference type="ChEBI" id="CHEBI:58533"/>
        <dbReference type="ChEBI" id="CHEBI:58548"/>
        <dbReference type="EC" id="5.3.1.23"/>
    </reaction>
</comment>
<comment type="pathway">
    <text evidence="1">Amino-acid biosynthesis; L-methionine biosynthesis via salvage pathway; L-methionine from S-methyl-5-thio-alpha-D-ribose 1-phosphate: step 1/6.</text>
</comment>
<comment type="subcellular location">
    <subcellularLocation>
        <location evidence="1">Cytoplasm</location>
    </subcellularLocation>
    <subcellularLocation>
        <location evidence="1">Nucleus</location>
    </subcellularLocation>
</comment>
<comment type="similarity">
    <text evidence="1">Belongs to the eIF-2B alpha/beta/delta subunits family. MtnA subfamily.</text>
</comment>